<feature type="chain" id="PRO_1000066864" description="UPF0229 protein lpl2726">
    <location>
        <begin position="1"/>
        <end position="421"/>
    </location>
</feature>
<feature type="region of interest" description="Disordered" evidence="2">
    <location>
        <begin position="83"/>
        <end position="110"/>
    </location>
</feature>
<feature type="compositionally biased region" description="Gly residues" evidence="2">
    <location>
        <begin position="91"/>
        <end position="101"/>
    </location>
</feature>
<name>Y2726_LEGPL</name>
<comment type="similarity">
    <text evidence="1">Belongs to the UPF0229 family.</text>
</comment>
<reference key="1">
    <citation type="journal article" date="2004" name="Nat. Genet.">
        <title>Evidence in the Legionella pneumophila genome for exploitation of host cell functions and high genome plasticity.</title>
        <authorList>
            <person name="Cazalet C."/>
            <person name="Rusniok C."/>
            <person name="Brueggemann H."/>
            <person name="Zidane N."/>
            <person name="Magnier A."/>
            <person name="Ma L."/>
            <person name="Tichit M."/>
            <person name="Jarraud S."/>
            <person name="Bouchier C."/>
            <person name="Vandenesch F."/>
            <person name="Kunst F."/>
            <person name="Etienne J."/>
            <person name="Glaser P."/>
            <person name="Buchrieser C."/>
        </authorList>
    </citation>
    <scope>NUCLEOTIDE SEQUENCE [LARGE SCALE GENOMIC DNA]</scope>
    <source>
        <strain>Lens</strain>
    </source>
</reference>
<evidence type="ECO:0000255" key="1">
    <source>
        <dbReference type="HAMAP-Rule" id="MF_01232"/>
    </source>
</evidence>
<evidence type="ECO:0000256" key="2">
    <source>
        <dbReference type="SAM" id="MobiDB-lite"/>
    </source>
</evidence>
<dbReference type="EMBL" id="CR628337">
    <property type="protein sequence ID" value="CAH16967.1"/>
    <property type="molecule type" value="Genomic_DNA"/>
</dbReference>
<dbReference type="RefSeq" id="WP_011216652.1">
    <property type="nucleotide sequence ID" value="NC_006369.1"/>
</dbReference>
<dbReference type="KEGG" id="lpf:lpl2726"/>
<dbReference type="LegioList" id="lpl2726"/>
<dbReference type="HOGENOM" id="CLU_049702_0_0_6"/>
<dbReference type="Proteomes" id="UP000002517">
    <property type="component" value="Chromosome"/>
</dbReference>
<dbReference type="HAMAP" id="MF_01232">
    <property type="entry name" value="UPF0229"/>
    <property type="match status" value="1"/>
</dbReference>
<dbReference type="InterPro" id="IPR006698">
    <property type="entry name" value="UPF0229"/>
</dbReference>
<dbReference type="InterPro" id="IPR036465">
    <property type="entry name" value="vWFA_dom_sf"/>
</dbReference>
<dbReference type="NCBIfam" id="NF003707">
    <property type="entry name" value="PRK05325.1-2"/>
    <property type="match status" value="1"/>
</dbReference>
<dbReference type="NCBIfam" id="NF003708">
    <property type="entry name" value="PRK05325.1-3"/>
    <property type="match status" value="1"/>
</dbReference>
<dbReference type="PANTHER" id="PTHR30510">
    <property type="entry name" value="UPF0229 PROTEIN YEAH"/>
    <property type="match status" value="1"/>
</dbReference>
<dbReference type="PANTHER" id="PTHR30510:SF2">
    <property type="entry name" value="UPF0229 PROTEIN YEAH"/>
    <property type="match status" value="1"/>
</dbReference>
<dbReference type="Pfam" id="PF04285">
    <property type="entry name" value="DUF444"/>
    <property type="match status" value="1"/>
</dbReference>
<dbReference type="SUPFAM" id="SSF53300">
    <property type="entry name" value="vWA-like"/>
    <property type="match status" value="1"/>
</dbReference>
<protein>
    <recommendedName>
        <fullName evidence="1">UPF0229 protein lpl2726</fullName>
    </recommendedName>
</protein>
<organism>
    <name type="scientific">Legionella pneumophila (strain Lens)</name>
    <dbReference type="NCBI Taxonomy" id="297245"/>
    <lineage>
        <taxon>Bacteria</taxon>
        <taxon>Pseudomonadati</taxon>
        <taxon>Pseudomonadota</taxon>
        <taxon>Gammaproteobacteria</taxon>
        <taxon>Legionellales</taxon>
        <taxon>Legionellaceae</taxon>
        <taxon>Legionella</taxon>
    </lineage>
</organism>
<gene>
    <name type="ordered locus">lpl2726</name>
</gene>
<proteinExistence type="inferred from homology"/>
<sequence>MSQLIDRRQNAGKKSTVNRQRFLRRYKSQIKKAVSEAVGKRSITEIDQGEQITIPAKDIYEPQFHRGHGGHIERVLPGNDNFIAGDRIKRPGGGGSGGAGGNASDSGEGEDNFVFELSREEFLELYFEDLELPDLVKKELARISTYKTVRAGVTTSGIPNNINVLRSMKQATGRRVALASPYKRRLKEAEEELERLKQLANPDKLDILKLERDIEFFKKKIQTVPFVDTIDLRYNHRVRVPSPSTQAVMFCVMDVSGSMDEAKKDIAKRFFILLYMFLTKNYEKIELVFIRHHTSAKEVNEEEFFYSRETGGTVVSSALELLNTIIEARYPPQAWNIYVAQASDGDNWNADSPYCQELLQEKIMPLLQYFAYIEIMPRHHQSLWEVYQQVKERYPNFAMENIDNVADIYPVFRELFKRKTV</sequence>
<accession>Q5WSZ9</accession>